<sequence>MSLIDIQNLTIKNTSEKSLIKGIDLKIFSQQINALIGESGAGKSLIAKALLEYLPFDLSCTYDSYQFDGENVSRLSQYYGHTIGYISQNYAESFNDHTKLGKQLTAIYRKHYKGSKEEALSKVDKALSWVNLQSKDILNKYSFQLSGGQLERVYIASVLMLEPKLIIADEPVASLDALNGNQVMDLLQHIVLEHGQTLFIITHNLSHVLKYCQYIYVLKEGQIIERGNINHFKYEHLHPYTERLIKYRTQLKRDYYD</sequence>
<evidence type="ECO:0000250" key="1">
    <source>
        <dbReference type="UniProtKB" id="Q2FYQ7"/>
    </source>
</evidence>
<evidence type="ECO:0000255" key="2">
    <source>
        <dbReference type="PROSITE-ProRule" id="PRU00434"/>
    </source>
</evidence>
<evidence type="ECO:0000305" key="3"/>
<comment type="function">
    <text evidence="1">Part of the ABC transporter complex NikABCDE (Opp2) involved in nickel import. Probably responsible for energy coupling to the transport system.</text>
</comment>
<comment type="catalytic activity">
    <reaction evidence="1">
        <text>Ni(2+)(out) + ATP + H2O = Ni(2+)(in) + ADP + phosphate + H(+)</text>
        <dbReference type="Rhea" id="RHEA:15557"/>
        <dbReference type="ChEBI" id="CHEBI:15377"/>
        <dbReference type="ChEBI" id="CHEBI:15378"/>
        <dbReference type="ChEBI" id="CHEBI:30616"/>
        <dbReference type="ChEBI" id="CHEBI:43474"/>
        <dbReference type="ChEBI" id="CHEBI:49786"/>
        <dbReference type="ChEBI" id="CHEBI:456216"/>
        <dbReference type="EC" id="7.2.2.11"/>
    </reaction>
    <physiologicalReaction direction="left-to-right" evidence="1">
        <dbReference type="Rhea" id="RHEA:15558"/>
    </physiologicalReaction>
</comment>
<comment type="subunit">
    <text evidence="1">The complex is composed of two ATP-binding proteins (NikD and NikE), two transmembrane proteins (NikB and NikC) and a solute-binding protein (NikA).</text>
</comment>
<comment type="subcellular location">
    <subcellularLocation>
        <location evidence="3">Cell membrane</location>
        <topology evidence="3">Peripheral membrane protein</topology>
    </subcellularLocation>
</comment>
<comment type="similarity">
    <text evidence="3">Belongs to the ABC transporter superfamily.</text>
</comment>
<accession>Q2FH57</accession>
<keyword id="KW-0067">ATP-binding</keyword>
<keyword id="KW-1003">Cell membrane</keyword>
<keyword id="KW-0406">Ion transport</keyword>
<keyword id="KW-0472">Membrane</keyword>
<keyword id="KW-0533">Nickel</keyword>
<keyword id="KW-0921">Nickel transport</keyword>
<keyword id="KW-0547">Nucleotide-binding</keyword>
<keyword id="KW-1278">Translocase</keyword>
<keyword id="KW-0813">Transport</keyword>
<dbReference type="EC" id="7.2.2.11" evidence="1"/>
<dbReference type="EMBL" id="CP000255">
    <property type="protein sequence ID" value="ABD21491.1"/>
    <property type="molecule type" value="Genomic_DNA"/>
</dbReference>
<dbReference type="RefSeq" id="WP_000052317.1">
    <property type="nucleotide sequence ID" value="NZ_CP027476.1"/>
</dbReference>
<dbReference type="SMR" id="Q2FH57"/>
<dbReference type="KEGG" id="saa:SAUSA300_1274"/>
<dbReference type="HOGENOM" id="CLU_000604_1_23_9"/>
<dbReference type="OMA" id="IYRQHYK"/>
<dbReference type="Proteomes" id="UP000001939">
    <property type="component" value="Chromosome"/>
</dbReference>
<dbReference type="GO" id="GO:0005886">
    <property type="term" value="C:plasma membrane"/>
    <property type="evidence" value="ECO:0007669"/>
    <property type="project" value="UniProtKB-SubCell"/>
</dbReference>
<dbReference type="GO" id="GO:0015413">
    <property type="term" value="F:ABC-type nickel transporter activity"/>
    <property type="evidence" value="ECO:0007669"/>
    <property type="project" value="UniProtKB-EC"/>
</dbReference>
<dbReference type="GO" id="GO:0005524">
    <property type="term" value="F:ATP binding"/>
    <property type="evidence" value="ECO:0007669"/>
    <property type="project" value="UniProtKB-KW"/>
</dbReference>
<dbReference type="GO" id="GO:0016887">
    <property type="term" value="F:ATP hydrolysis activity"/>
    <property type="evidence" value="ECO:0007669"/>
    <property type="project" value="InterPro"/>
</dbReference>
<dbReference type="FunFam" id="3.40.50.300:FF:001826">
    <property type="entry name" value="Nickel import system ATP-binding protein NikD"/>
    <property type="match status" value="1"/>
</dbReference>
<dbReference type="Gene3D" id="3.40.50.300">
    <property type="entry name" value="P-loop containing nucleotide triphosphate hydrolases"/>
    <property type="match status" value="1"/>
</dbReference>
<dbReference type="InterPro" id="IPR003593">
    <property type="entry name" value="AAA+_ATPase"/>
</dbReference>
<dbReference type="InterPro" id="IPR050388">
    <property type="entry name" value="ABC_Ni/Peptide_Import"/>
</dbReference>
<dbReference type="InterPro" id="IPR003439">
    <property type="entry name" value="ABC_transporter-like_ATP-bd"/>
</dbReference>
<dbReference type="InterPro" id="IPR027417">
    <property type="entry name" value="P-loop_NTPase"/>
</dbReference>
<dbReference type="PANTHER" id="PTHR43297:SF13">
    <property type="entry name" value="NICKEL ABC TRANSPORTER, ATP-BINDING PROTEIN"/>
    <property type="match status" value="1"/>
</dbReference>
<dbReference type="PANTHER" id="PTHR43297">
    <property type="entry name" value="OLIGOPEPTIDE TRANSPORT ATP-BINDING PROTEIN APPD"/>
    <property type="match status" value="1"/>
</dbReference>
<dbReference type="Pfam" id="PF00005">
    <property type="entry name" value="ABC_tran"/>
    <property type="match status" value="1"/>
</dbReference>
<dbReference type="SMART" id="SM00382">
    <property type="entry name" value="AAA"/>
    <property type="match status" value="1"/>
</dbReference>
<dbReference type="SUPFAM" id="SSF52540">
    <property type="entry name" value="P-loop containing nucleoside triphosphate hydrolases"/>
    <property type="match status" value="1"/>
</dbReference>
<dbReference type="PROSITE" id="PS50893">
    <property type="entry name" value="ABC_TRANSPORTER_2"/>
    <property type="match status" value="1"/>
</dbReference>
<protein>
    <recommendedName>
        <fullName evidence="1">Nickel import system ATP-binding protein NikD</fullName>
        <ecNumber evidence="1">7.2.2.11</ecNumber>
    </recommendedName>
</protein>
<proteinExistence type="inferred from homology"/>
<gene>
    <name evidence="1" type="primary">nikD</name>
    <name type="synonym">oppD2</name>
    <name type="ordered locus">SAUSA300_1274</name>
</gene>
<name>NIKD_STAA3</name>
<feature type="chain" id="PRO_0000276799" description="Nickel import system ATP-binding protein NikD">
    <location>
        <begin position="1"/>
        <end position="257"/>
    </location>
</feature>
<feature type="domain" description="ABC transporter" evidence="2">
    <location>
        <begin position="4"/>
        <end position="245"/>
    </location>
</feature>
<feature type="binding site" evidence="2">
    <location>
        <begin position="37"/>
        <end position="44"/>
    </location>
    <ligand>
        <name>ATP</name>
        <dbReference type="ChEBI" id="CHEBI:30616"/>
    </ligand>
</feature>
<reference key="1">
    <citation type="journal article" date="2006" name="Lancet">
        <title>Complete genome sequence of USA300, an epidemic clone of community-acquired meticillin-resistant Staphylococcus aureus.</title>
        <authorList>
            <person name="Diep B.A."/>
            <person name="Gill S.R."/>
            <person name="Chang R.F."/>
            <person name="Phan T.H."/>
            <person name="Chen J.H."/>
            <person name="Davidson M.G."/>
            <person name="Lin F."/>
            <person name="Lin J."/>
            <person name="Carleton H.A."/>
            <person name="Mongodin E.F."/>
            <person name="Sensabaugh G.F."/>
            <person name="Perdreau-Remington F."/>
        </authorList>
    </citation>
    <scope>NUCLEOTIDE SEQUENCE [LARGE SCALE GENOMIC DNA]</scope>
    <source>
        <strain>USA300</strain>
    </source>
</reference>
<organism>
    <name type="scientific">Staphylococcus aureus (strain USA300)</name>
    <dbReference type="NCBI Taxonomy" id="367830"/>
    <lineage>
        <taxon>Bacteria</taxon>
        <taxon>Bacillati</taxon>
        <taxon>Bacillota</taxon>
        <taxon>Bacilli</taxon>
        <taxon>Bacillales</taxon>
        <taxon>Staphylococcaceae</taxon>
        <taxon>Staphylococcus</taxon>
    </lineage>
</organism>